<gene>
    <name evidence="1" type="primary">leuD</name>
    <name type="ordered locus">SO_4233</name>
</gene>
<evidence type="ECO:0000255" key="1">
    <source>
        <dbReference type="HAMAP-Rule" id="MF_01031"/>
    </source>
</evidence>
<feature type="chain" id="PRO_0000141877" description="3-isopropylmalate dehydratase small subunit">
    <location>
        <begin position="1"/>
        <end position="201"/>
    </location>
</feature>
<keyword id="KW-0028">Amino-acid biosynthesis</keyword>
<keyword id="KW-0100">Branched-chain amino acid biosynthesis</keyword>
<keyword id="KW-0432">Leucine biosynthesis</keyword>
<keyword id="KW-0456">Lyase</keyword>
<keyword id="KW-1185">Reference proteome</keyword>
<name>LEUD_SHEON</name>
<protein>
    <recommendedName>
        <fullName evidence="1">3-isopropylmalate dehydratase small subunit</fullName>
        <ecNumber evidence="1">4.2.1.33</ecNumber>
    </recommendedName>
    <alternativeName>
        <fullName evidence="1">Alpha-IPM isomerase</fullName>
        <shortName evidence="1">IPMI</shortName>
    </alternativeName>
    <alternativeName>
        <fullName evidence="1">Isopropylmalate isomerase</fullName>
    </alternativeName>
</protein>
<reference key="1">
    <citation type="journal article" date="2002" name="Nat. Biotechnol.">
        <title>Genome sequence of the dissimilatory metal ion-reducing bacterium Shewanella oneidensis.</title>
        <authorList>
            <person name="Heidelberg J.F."/>
            <person name="Paulsen I.T."/>
            <person name="Nelson K.E."/>
            <person name="Gaidos E.J."/>
            <person name="Nelson W.C."/>
            <person name="Read T.D."/>
            <person name="Eisen J.A."/>
            <person name="Seshadri R."/>
            <person name="Ward N.L."/>
            <person name="Methe B.A."/>
            <person name="Clayton R.A."/>
            <person name="Meyer T."/>
            <person name="Tsapin A."/>
            <person name="Scott J."/>
            <person name="Beanan M.J."/>
            <person name="Brinkac L.M."/>
            <person name="Daugherty S.C."/>
            <person name="DeBoy R.T."/>
            <person name="Dodson R.J."/>
            <person name="Durkin A.S."/>
            <person name="Haft D.H."/>
            <person name="Kolonay J.F."/>
            <person name="Madupu R."/>
            <person name="Peterson J.D."/>
            <person name="Umayam L.A."/>
            <person name="White O."/>
            <person name="Wolf A.M."/>
            <person name="Vamathevan J.J."/>
            <person name="Weidman J.F."/>
            <person name="Impraim M."/>
            <person name="Lee K."/>
            <person name="Berry K.J."/>
            <person name="Lee C."/>
            <person name="Mueller J."/>
            <person name="Khouri H.M."/>
            <person name="Gill J."/>
            <person name="Utterback T.R."/>
            <person name="McDonald L.A."/>
            <person name="Feldblyum T.V."/>
            <person name="Smith H.O."/>
            <person name="Venter J.C."/>
            <person name="Nealson K.H."/>
            <person name="Fraser C.M."/>
        </authorList>
    </citation>
    <scope>NUCLEOTIDE SEQUENCE [LARGE SCALE GENOMIC DNA]</scope>
    <source>
        <strain>ATCC 700550 / JCM 31522 / CIP 106686 / LMG 19005 / NCIMB 14063 / MR-1</strain>
    </source>
</reference>
<organism>
    <name type="scientific">Shewanella oneidensis (strain ATCC 700550 / JCM 31522 / CIP 106686 / LMG 19005 / NCIMB 14063 / MR-1)</name>
    <dbReference type="NCBI Taxonomy" id="211586"/>
    <lineage>
        <taxon>Bacteria</taxon>
        <taxon>Pseudomonadati</taxon>
        <taxon>Pseudomonadota</taxon>
        <taxon>Gammaproteobacteria</taxon>
        <taxon>Alteromonadales</taxon>
        <taxon>Shewanellaceae</taxon>
        <taxon>Shewanella</taxon>
    </lineage>
</organism>
<proteinExistence type="inferred from homology"/>
<accession>Q8E9N5</accession>
<dbReference type="EC" id="4.2.1.33" evidence="1"/>
<dbReference type="EMBL" id="AE014299">
    <property type="protein sequence ID" value="AAN57204.1"/>
    <property type="molecule type" value="Genomic_DNA"/>
</dbReference>
<dbReference type="RefSeq" id="NP_719760.1">
    <property type="nucleotide sequence ID" value="NC_004347.2"/>
</dbReference>
<dbReference type="RefSeq" id="WP_011073913.1">
    <property type="nucleotide sequence ID" value="NC_004347.2"/>
</dbReference>
<dbReference type="SMR" id="Q8E9N5"/>
<dbReference type="STRING" id="211586.SO_4233"/>
<dbReference type="PaxDb" id="211586-SO_4233"/>
<dbReference type="KEGG" id="son:SO_4233"/>
<dbReference type="PATRIC" id="fig|211586.12.peg.4092"/>
<dbReference type="eggNOG" id="COG0066">
    <property type="taxonomic scope" value="Bacteria"/>
</dbReference>
<dbReference type="HOGENOM" id="CLU_081378_0_3_6"/>
<dbReference type="OrthoDB" id="9777465at2"/>
<dbReference type="PhylomeDB" id="Q8E9N5"/>
<dbReference type="BioCyc" id="SONE211586:G1GMP-3910-MONOMER"/>
<dbReference type="UniPathway" id="UPA00048">
    <property type="reaction ID" value="UER00071"/>
</dbReference>
<dbReference type="Proteomes" id="UP000008186">
    <property type="component" value="Chromosome"/>
</dbReference>
<dbReference type="GO" id="GO:0009316">
    <property type="term" value="C:3-isopropylmalate dehydratase complex"/>
    <property type="evidence" value="ECO:0007669"/>
    <property type="project" value="InterPro"/>
</dbReference>
<dbReference type="GO" id="GO:0003861">
    <property type="term" value="F:3-isopropylmalate dehydratase activity"/>
    <property type="evidence" value="ECO:0007669"/>
    <property type="project" value="UniProtKB-UniRule"/>
</dbReference>
<dbReference type="GO" id="GO:0009098">
    <property type="term" value="P:L-leucine biosynthetic process"/>
    <property type="evidence" value="ECO:0007669"/>
    <property type="project" value="UniProtKB-UniRule"/>
</dbReference>
<dbReference type="CDD" id="cd01577">
    <property type="entry name" value="IPMI_Swivel"/>
    <property type="match status" value="1"/>
</dbReference>
<dbReference type="FunFam" id="3.20.19.10:FF:000003">
    <property type="entry name" value="3-isopropylmalate dehydratase small subunit"/>
    <property type="match status" value="1"/>
</dbReference>
<dbReference type="Gene3D" id="3.20.19.10">
    <property type="entry name" value="Aconitase, domain 4"/>
    <property type="match status" value="1"/>
</dbReference>
<dbReference type="HAMAP" id="MF_01031">
    <property type="entry name" value="LeuD_type1"/>
    <property type="match status" value="1"/>
</dbReference>
<dbReference type="InterPro" id="IPR004431">
    <property type="entry name" value="3-IsopropMal_deHydase_ssu"/>
</dbReference>
<dbReference type="InterPro" id="IPR015928">
    <property type="entry name" value="Aconitase/3IPM_dehydase_swvl"/>
</dbReference>
<dbReference type="InterPro" id="IPR000573">
    <property type="entry name" value="AconitaseA/IPMdHydase_ssu_swvl"/>
</dbReference>
<dbReference type="InterPro" id="IPR033940">
    <property type="entry name" value="IPMI_Swivel"/>
</dbReference>
<dbReference type="InterPro" id="IPR050075">
    <property type="entry name" value="LeuD"/>
</dbReference>
<dbReference type="NCBIfam" id="TIGR00171">
    <property type="entry name" value="leuD"/>
    <property type="match status" value="1"/>
</dbReference>
<dbReference type="NCBIfam" id="NF002458">
    <property type="entry name" value="PRK01641.1"/>
    <property type="match status" value="1"/>
</dbReference>
<dbReference type="PANTHER" id="PTHR43345:SF5">
    <property type="entry name" value="3-ISOPROPYLMALATE DEHYDRATASE SMALL SUBUNIT"/>
    <property type="match status" value="1"/>
</dbReference>
<dbReference type="PANTHER" id="PTHR43345">
    <property type="entry name" value="3-ISOPROPYLMALATE DEHYDRATASE SMALL SUBUNIT 2-RELATED-RELATED"/>
    <property type="match status" value="1"/>
</dbReference>
<dbReference type="Pfam" id="PF00694">
    <property type="entry name" value="Aconitase_C"/>
    <property type="match status" value="1"/>
</dbReference>
<dbReference type="SUPFAM" id="SSF52016">
    <property type="entry name" value="LeuD/IlvD-like"/>
    <property type="match status" value="1"/>
</dbReference>
<comment type="function">
    <text evidence="1">Catalyzes the isomerization between 2-isopropylmalate and 3-isopropylmalate, via the formation of 2-isopropylmaleate.</text>
</comment>
<comment type="catalytic activity">
    <reaction evidence="1">
        <text>(2R,3S)-3-isopropylmalate = (2S)-2-isopropylmalate</text>
        <dbReference type="Rhea" id="RHEA:32287"/>
        <dbReference type="ChEBI" id="CHEBI:1178"/>
        <dbReference type="ChEBI" id="CHEBI:35121"/>
        <dbReference type="EC" id="4.2.1.33"/>
    </reaction>
</comment>
<comment type="pathway">
    <text evidence="1">Amino-acid biosynthesis; L-leucine biosynthesis; L-leucine from 3-methyl-2-oxobutanoate: step 2/4.</text>
</comment>
<comment type="subunit">
    <text evidence="1">Heterodimer of LeuC and LeuD.</text>
</comment>
<comment type="similarity">
    <text evidence="1">Belongs to the LeuD family. LeuD type 1 subfamily.</text>
</comment>
<sequence length="201" mass="22013">MQPFTCHTGLAVMIDSANIDTDQIIPKQFLSKVTRDGFGVHLFHDWRYLDDAGDVPNPEFTLNKPRYNGASILLAQENFGCGSSREHAPWALADFGLRAIIAPSFADIFYGNSINNGLLPVKLSANEVRQLMDEVASEEGAQITVDLTTCQVTSPSGAQFSFSLAESARHKLLNGLDAIGLTLSHGAQISEYESQIPSWRR</sequence>